<keyword id="KW-0066">ATP synthesis</keyword>
<keyword id="KW-0067">ATP-binding</keyword>
<keyword id="KW-1003">Cell membrane</keyword>
<keyword id="KW-0139">CF(1)</keyword>
<keyword id="KW-0375">Hydrogen ion transport</keyword>
<keyword id="KW-0406">Ion transport</keyword>
<keyword id="KW-0472">Membrane</keyword>
<keyword id="KW-0547">Nucleotide-binding</keyword>
<keyword id="KW-1185">Reference proteome</keyword>
<keyword id="KW-1278">Translocase</keyword>
<keyword id="KW-0813">Transport</keyword>
<feature type="chain" id="PRO_0000302641" description="ATP synthase subunit alpha">
    <location>
        <begin position="1"/>
        <end position="506"/>
    </location>
</feature>
<feature type="binding site" evidence="1">
    <location>
        <begin position="169"/>
        <end position="176"/>
    </location>
    <ligand>
        <name>ATP</name>
        <dbReference type="ChEBI" id="CHEBI:30616"/>
    </ligand>
</feature>
<feature type="site" description="Required for activity" evidence="1">
    <location>
        <position position="363"/>
    </location>
</feature>
<dbReference type="EC" id="7.1.2.2" evidence="1"/>
<dbReference type="EMBL" id="CP000568">
    <property type="protein sequence ID" value="ABN53806.1"/>
    <property type="molecule type" value="Genomic_DNA"/>
</dbReference>
<dbReference type="RefSeq" id="WP_020457876.1">
    <property type="nucleotide sequence ID" value="NC_009012.1"/>
</dbReference>
<dbReference type="SMR" id="A3DIM7"/>
<dbReference type="STRING" id="203119.Cthe_2606"/>
<dbReference type="GeneID" id="35806165"/>
<dbReference type="KEGG" id="cth:Cthe_2606"/>
<dbReference type="eggNOG" id="COG0056">
    <property type="taxonomic scope" value="Bacteria"/>
</dbReference>
<dbReference type="HOGENOM" id="CLU_010091_2_1_9"/>
<dbReference type="OrthoDB" id="9803053at2"/>
<dbReference type="Proteomes" id="UP000002145">
    <property type="component" value="Chromosome"/>
</dbReference>
<dbReference type="GO" id="GO:0005886">
    <property type="term" value="C:plasma membrane"/>
    <property type="evidence" value="ECO:0007669"/>
    <property type="project" value="UniProtKB-SubCell"/>
</dbReference>
<dbReference type="GO" id="GO:0045259">
    <property type="term" value="C:proton-transporting ATP synthase complex"/>
    <property type="evidence" value="ECO:0007669"/>
    <property type="project" value="UniProtKB-KW"/>
</dbReference>
<dbReference type="GO" id="GO:0043531">
    <property type="term" value="F:ADP binding"/>
    <property type="evidence" value="ECO:0007669"/>
    <property type="project" value="TreeGrafter"/>
</dbReference>
<dbReference type="GO" id="GO:0005524">
    <property type="term" value="F:ATP binding"/>
    <property type="evidence" value="ECO:0007669"/>
    <property type="project" value="UniProtKB-UniRule"/>
</dbReference>
<dbReference type="GO" id="GO:0046933">
    <property type="term" value="F:proton-transporting ATP synthase activity, rotational mechanism"/>
    <property type="evidence" value="ECO:0007669"/>
    <property type="project" value="UniProtKB-UniRule"/>
</dbReference>
<dbReference type="CDD" id="cd18113">
    <property type="entry name" value="ATP-synt_F1_alpha_C"/>
    <property type="match status" value="1"/>
</dbReference>
<dbReference type="CDD" id="cd18116">
    <property type="entry name" value="ATP-synt_F1_alpha_N"/>
    <property type="match status" value="1"/>
</dbReference>
<dbReference type="CDD" id="cd01132">
    <property type="entry name" value="F1-ATPase_alpha_CD"/>
    <property type="match status" value="1"/>
</dbReference>
<dbReference type="FunFam" id="1.20.150.20:FF:000001">
    <property type="entry name" value="ATP synthase subunit alpha"/>
    <property type="match status" value="1"/>
</dbReference>
<dbReference type="FunFam" id="2.40.30.20:FF:000001">
    <property type="entry name" value="ATP synthase subunit alpha"/>
    <property type="match status" value="1"/>
</dbReference>
<dbReference type="FunFam" id="3.40.50.300:FF:000002">
    <property type="entry name" value="ATP synthase subunit alpha"/>
    <property type="match status" value="1"/>
</dbReference>
<dbReference type="Gene3D" id="2.40.30.20">
    <property type="match status" value="1"/>
</dbReference>
<dbReference type="Gene3D" id="1.20.150.20">
    <property type="entry name" value="ATP synthase alpha/beta chain, C-terminal domain"/>
    <property type="match status" value="1"/>
</dbReference>
<dbReference type="Gene3D" id="3.40.50.300">
    <property type="entry name" value="P-loop containing nucleotide triphosphate hydrolases"/>
    <property type="match status" value="1"/>
</dbReference>
<dbReference type="HAMAP" id="MF_01346">
    <property type="entry name" value="ATP_synth_alpha_bact"/>
    <property type="match status" value="1"/>
</dbReference>
<dbReference type="InterPro" id="IPR023366">
    <property type="entry name" value="ATP_synth_asu-like_sf"/>
</dbReference>
<dbReference type="InterPro" id="IPR000793">
    <property type="entry name" value="ATP_synth_asu_C"/>
</dbReference>
<dbReference type="InterPro" id="IPR038376">
    <property type="entry name" value="ATP_synth_asu_C_sf"/>
</dbReference>
<dbReference type="InterPro" id="IPR033732">
    <property type="entry name" value="ATP_synth_F1_a_nt-bd_dom"/>
</dbReference>
<dbReference type="InterPro" id="IPR005294">
    <property type="entry name" value="ATP_synth_F1_asu"/>
</dbReference>
<dbReference type="InterPro" id="IPR020003">
    <property type="entry name" value="ATPase_a/bsu_AS"/>
</dbReference>
<dbReference type="InterPro" id="IPR004100">
    <property type="entry name" value="ATPase_F1/V1/A1_a/bsu_N"/>
</dbReference>
<dbReference type="InterPro" id="IPR036121">
    <property type="entry name" value="ATPase_F1/V1/A1_a/bsu_N_sf"/>
</dbReference>
<dbReference type="InterPro" id="IPR000194">
    <property type="entry name" value="ATPase_F1/V1/A1_a/bsu_nucl-bd"/>
</dbReference>
<dbReference type="InterPro" id="IPR027417">
    <property type="entry name" value="P-loop_NTPase"/>
</dbReference>
<dbReference type="NCBIfam" id="TIGR00962">
    <property type="entry name" value="atpA"/>
    <property type="match status" value="1"/>
</dbReference>
<dbReference type="NCBIfam" id="NF009884">
    <property type="entry name" value="PRK13343.1"/>
    <property type="match status" value="1"/>
</dbReference>
<dbReference type="PANTHER" id="PTHR48082">
    <property type="entry name" value="ATP SYNTHASE SUBUNIT ALPHA, MITOCHONDRIAL"/>
    <property type="match status" value="1"/>
</dbReference>
<dbReference type="PANTHER" id="PTHR48082:SF2">
    <property type="entry name" value="ATP SYNTHASE SUBUNIT ALPHA, MITOCHONDRIAL"/>
    <property type="match status" value="1"/>
</dbReference>
<dbReference type="Pfam" id="PF00006">
    <property type="entry name" value="ATP-synt_ab"/>
    <property type="match status" value="1"/>
</dbReference>
<dbReference type="Pfam" id="PF00306">
    <property type="entry name" value="ATP-synt_ab_C"/>
    <property type="match status" value="1"/>
</dbReference>
<dbReference type="Pfam" id="PF02874">
    <property type="entry name" value="ATP-synt_ab_N"/>
    <property type="match status" value="1"/>
</dbReference>
<dbReference type="PIRSF" id="PIRSF039088">
    <property type="entry name" value="F_ATPase_subunit_alpha"/>
    <property type="match status" value="1"/>
</dbReference>
<dbReference type="SUPFAM" id="SSF47917">
    <property type="entry name" value="C-terminal domain of alpha and beta subunits of F1 ATP synthase"/>
    <property type="match status" value="1"/>
</dbReference>
<dbReference type="SUPFAM" id="SSF50615">
    <property type="entry name" value="N-terminal domain of alpha and beta subunits of F1 ATP synthase"/>
    <property type="match status" value="1"/>
</dbReference>
<dbReference type="SUPFAM" id="SSF52540">
    <property type="entry name" value="P-loop containing nucleoside triphosphate hydrolases"/>
    <property type="match status" value="1"/>
</dbReference>
<dbReference type="PROSITE" id="PS00152">
    <property type="entry name" value="ATPASE_ALPHA_BETA"/>
    <property type="match status" value="1"/>
</dbReference>
<name>ATPA_ACET2</name>
<reference key="1">
    <citation type="submission" date="2007-02" db="EMBL/GenBank/DDBJ databases">
        <title>Complete sequence of Clostridium thermocellum ATCC 27405.</title>
        <authorList>
            <consortium name="US DOE Joint Genome Institute"/>
            <person name="Copeland A."/>
            <person name="Lucas S."/>
            <person name="Lapidus A."/>
            <person name="Barry K."/>
            <person name="Detter J.C."/>
            <person name="Glavina del Rio T."/>
            <person name="Hammon N."/>
            <person name="Israni S."/>
            <person name="Dalin E."/>
            <person name="Tice H."/>
            <person name="Pitluck S."/>
            <person name="Chertkov O."/>
            <person name="Brettin T."/>
            <person name="Bruce D."/>
            <person name="Han C."/>
            <person name="Tapia R."/>
            <person name="Gilna P."/>
            <person name="Schmutz J."/>
            <person name="Larimer F."/>
            <person name="Land M."/>
            <person name="Hauser L."/>
            <person name="Kyrpides N."/>
            <person name="Mikhailova N."/>
            <person name="Wu J.H.D."/>
            <person name="Newcomb M."/>
            <person name="Richardson P."/>
        </authorList>
    </citation>
    <scope>NUCLEOTIDE SEQUENCE [LARGE SCALE GENOMIC DNA]</scope>
    <source>
        <strain>ATCC 27405 / DSM 1237 / JCM 9322 / NBRC 103400 / NCIMB 10682 / NRRL B-4536 / VPI 7372</strain>
    </source>
</reference>
<protein>
    <recommendedName>
        <fullName evidence="1">ATP synthase subunit alpha</fullName>
        <ecNumber evidence="1">7.1.2.2</ecNumber>
    </recommendedName>
    <alternativeName>
        <fullName evidence="1">ATP synthase F1 sector subunit alpha</fullName>
    </alternativeName>
    <alternativeName>
        <fullName evidence="1">F-ATPase subunit alpha</fullName>
    </alternativeName>
</protein>
<evidence type="ECO:0000255" key="1">
    <source>
        <dbReference type="HAMAP-Rule" id="MF_01346"/>
    </source>
</evidence>
<organism>
    <name type="scientific">Acetivibrio thermocellus (strain ATCC 27405 / DSM 1237 / JCM 9322 / NBRC 103400 / NCIMB 10682 / NRRL B-4536 / VPI 7372)</name>
    <name type="common">Clostridium thermocellum</name>
    <dbReference type="NCBI Taxonomy" id="203119"/>
    <lineage>
        <taxon>Bacteria</taxon>
        <taxon>Bacillati</taxon>
        <taxon>Bacillota</taxon>
        <taxon>Clostridia</taxon>
        <taxon>Eubacteriales</taxon>
        <taxon>Oscillospiraceae</taxon>
        <taxon>Acetivibrio</taxon>
    </lineage>
</organism>
<gene>
    <name evidence="1" type="primary">atpA</name>
    <name type="ordered locus">Cthe_2606</name>
</gene>
<comment type="function">
    <text evidence="1">Produces ATP from ADP in the presence of a proton gradient across the membrane. The alpha chain is a regulatory subunit.</text>
</comment>
<comment type="catalytic activity">
    <reaction evidence="1">
        <text>ATP + H2O + 4 H(+)(in) = ADP + phosphate + 5 H(+)(out)</text>
        <dbReference type="Rhea" id="RHEA:57720"/>
        <dbReference type="ChEBI" id="CHEBI:15377"/>
        <dbReference type="ChEBI" id="CHEBI:15378"/>
        <dbReference type="ChEBI" id="CHEBI:30616"/>
        <dbReference type="ChEBI" id="CHEBI:43474"/>
        <dbReference type="ChEBI" id="CHEBI:456216"/>
        <dbReference type="EC" id="7.1.2.2"/>
    </reaction>
</comment>
<comment type="subunit">
    <text evidence="1">F-type ATPases have 2 components, CF(1) - the catalytic core - and CF(0) - the membrane proton channel. CF(1) has five subunits: alpha(3), beta(3), gamma(1), delta(1), epsilon(1). CF(0) has three main subunits: a(1), b(2) and c(9-12). The alpha and beta chains form an alternating ring which encloses part of the gamma chain. CF(1) is attached to CF(0) by a central stalk formed by the gamma and epsilon chains, while a peripheral stalk is formed by the delta and b chains.</text>
</comment>
<comment type="subcellular location">
    <subcellularLocation>
        <location evidence="1">Cell membrane</location>
        <topology evidence="1">Peripheral membrane protein</topology>
    </subcellularLocation>
</comment>
<comment type="similarity">
    <text evidence="1">Belongs to the ATPase alpha/beta chains family.</text>
</comment>
<accession>A3DIM7</accession>
<proteinExistence type="inferred from homology"/>
<sequence>MDLRPEEVSAIIKQQIDKYGNKSHVDDVGYVLQAGDGIARVYGLNNCMSGELLEFENGVFGMAMNLEEDNIGCVLFRGERDVKEGTLVKRTGKTVEVPVGKALIGRVIDPLGNPLDGKGEIETEKFRPIEYPAPSVMDRKPVNRPLQTGIMAIDAMVPIGRGQRELIIGDRQTGKTAIAVDTILNQKGKDVICIYVAIGQKASSVAEVINTLEEGGAMEYTVVVSSTASEMPTLQYIAPYAGCSIAEEFMYNDHKDVLIVYDDLSKHAVAYRAMSLLLRRPPGREAYPGDVFYLHSRLLERAAQLSDELGGGSITALPIIETQVGDVSAYIPTNVISITDGQIYLETELFYSGQRPAVNVGLSVSRVGGAAQIKAMKKVAGALRINLAQYRELAVFAQFGSDLDKVTKDKLIQGERLVESLKQSRRATMPVEDQVIVLYMATNKYLMDLPVKEVRSFNKEFVKFVNSNYPEIPNEIRATGDLSSETENMLKKAAEEFKDQYLRTKR</sequence>